<reference key="1">
    <citation type="journal article" date="2016" name="Stand. Genomic Sci.">
        <title>Complete genome sequence of Methanospirillum hungatei type strain JF1.</title>
        <authorList>
            <person name="Gunsalus R.P."/>
            <person name="Cook L.E."/>
            <person name="Crable B."/>
            <person name="Rohlin L."/>
            <person name="McDonald E."/>
            <person name="Mouttaki H."/>
            <person name="Sieber J.R."/>
            <person name="Poweleit N."/>
            <person name="Zhou H."/>
            <person name="Lapidus A.L."/>
            <person name="Daligault H.E."/>
            <person name="Land M."/>
            <person name="Gilna P."/>
            <person name="Ivanova N."/>
            <person name="Kyrpides N."/>
            <person name="Culley D.E."/>
            <person name="McInerney M.J."/>
        </authorList>
    </citation>
    <scope>NUCLEOTIDE SEQUENCE [LARGE SCALE GENOMIC DNA]</scope>
    <source>
        <strain>ATCC 27890 / DSM 864 / NBRC 100397 / JF-1</strain>
    </source>
</reference>
<sequence length="303" mass="34274">MGGFGAHIKSNRTEITIQHKGKITDIPIKDLSHFLLIGGHTIQTSTITSLVKEGVFISFCESDGEPVGYISPYDYSLFKEIQNLQKTAAPYSYALACANESIKSRILAIEKYAEEIGPEILFSGELDILTGYAKELENMVLIEELRRIEQLVRDMYYEILGRLISPTYLFKRRTSRPYLDPVNAIFSFGYGMLSSACTRAVIGGHLDPGHGYLNRGNQALVQDLMNCWKPKMIDNHAIGFLRSGRLHQNGYERTKDRCILHDEVIEELIHLFSKSIQEELINTQIDVLIQSLRGEAQFSIIKP</sequence>
<evidence type="ECO:0000250" key="1"/>
<evidence type="ECO:0000255" key="2">
    <source>
        <dbReference type="HAMAP-Rule" id="MF_01470"/>
    </source>
</evidence>
<evidence type="ECO:0000305" key="3"/>
<feature type="chain" id="PRO_0000417102" description="Putative CRISPR-associated endonuclease Cas1 2">
    <location>
        <begin position="1"/>
        <end position="303"/>
    </location>
</feature>
<feature type="binding site" evidence="2">
    <location>
        <position position="149"/>
    </location>
    <ligand>
        <name>Mn(2+)</name>
        <dbReference type="ChEBI" id="CHEBI:29035"/>
    </ligand>
</feature>
<dbReference type="EC" id="3.1.-.-" evidence="2"/>
<dbReference type="EMBL" id="CP000254">
    <property type="protein sequence ID" value="ABD40943.1"/>
    <property type="molecule type" value="Genomic_DNA"/>
</dbReference>
<dbReference type="SMR" id="Q2FPW6"/>
<dbReference type="STRING" id="323259.Mhun_1196"/>
<dbReference type="EnsemblBacteria" id="ABD40943">
    <property type="protein sequence ID" value="ABD40943"/>
    <property type="gene ID" value="Mhun_1196"/>
</dbReference>
<dbReference type="KEGG" id="mhu:Mhun_1196"/>
<dbReference type="eggNOG" id="arCOG01452">
    <property type="taxonomic scope" value="Archaea"/>
</dbReference>
<dbReference type="HOGENOM" id="CLU_052779_2_1_2"/>
<dbReference type="InParanoid" id="Q2FPW6"/>
<dbReference type="Proteomes" id="UP000001941">
    <property type="component" value="Chromosome"/>
</dbReference>
<dbReference type="GO" id="GO:0003677">
    <property type="term" value="F:DNA binding"/>
    <property type="evidence" value="ECO:0007669"/>
    <property type="project" value="UniProtKB-KW"/>
</dbReference>
<dbReference type="GO" id="GO:0004519">
    <property type="term" value="F:endonuclease activity"/>
    <property type="evidence" value="ECO:0007669"/>
    <property type="project" value="UniProtKB-UniRule"/>
</dbReference>
<dbReference type="GO" id="GO:0046872">
    <property type="term" value="F:metal ion binding"/>
    <property type="evidence" value="ECO:0007669"/>
    <property type="project" value="UniProtKB-UniRule"/>
</dbReference>
<dbReference type="GO" id="GO:0051607">
    <property type="term" value="P:defense response to virus"/>
    <property type="evidence" value="ECO:0007669"/>
    <property type="project" value="UniProtKB-UniRule"/>
</dbReference>
<dbReference type="GO" id="GO:0043571">
    <property type="term" value="P:maintenance of CRISPR repeat elements"/>
    <property type="evidence" value="ECO:0007669"/>
    <property type="project" value="UniProtKB-UniRule"/>
</dbReference>
<dbReference type="CDD" id="cd09634">
    <property type="entry name" value="Cas1_I-II-III"/>
    <property type="match status" value="1"/>
</dbReference>
<dbReference type="Gene3D" id="1.20.120.920">
    <property type="entry name" value="CRISPR-associated endonuclease Cas1, C-terminal domain"/>
    <property type="match status" value="1"/>
</dbReference>
<dbReference type="Gene3D" id="3.100.10.20">
    <property type="entry name" value="CRISPR-associated endonuclease Cas1, N-terminal domain"/>
    <property type="match status" value="1"/>
</dbReference>
<dbReference type="HAMAP" id="MF_01470">
    <property type="entry name" value="Cas1"/>
    <property type="match status" value="1"/>
</dbReference>
<dbReference type="InterPro" id="IPR050646">
    <property type="entry name" value="Cas1"/>
</dbReference>
<dbReference type="InterPro" id="IPR002729">
    <property type="entry name" value="CRISPR-assoc_Cas1"/>
</dbReference>
<dbReference type="InterPro" id="IPR042206">
    <property type="entry name" value="CRISPR-assoc_Cas1_C"/>
</dbReference>
<dbReference type="InterPro" id="IPR042211">
    <property type="entry name" value="CRISPR-assoc_Cas1_N"/>
</dbReference>
<dbReference type="NCBIfam" id="TIGR00287">
    <property type="entry name" value="cas1"/>
    <property type="match status" value="1"/>
</dbReference>
<dbReference type="PANTHER" id="PTHR34353">
    <property type="entry name" value="CRISPR-ASSOCIATED ENDONUCLEASE CAS1 1"/>
    <property type="match status" value="1"/>
</dbReference>
<dbReference type="PANTHER" id="PTHR34353:SF2">
    <property type="entry name" value="CRISPR-ASSOCIATED ENDONUCLEASE CAS1 1"/>
    <property type="match status" value="1"/>
</dbReference>
<dbReference type="Pfam" id="PF01867">
    <property type="entry name" value="Cas_Cas1"/>
    <property type="match status" value="1"/>
</dbReference>
<proteinExistence type="inferred from homology"/>
<accession>Q2FPW6</accession>
<gene>
    <name evidence="2" type="primary">cas1-2</name>
    <name type="ordered locus">Mhun_1196</name>
</gene>
<keyword id="KW-0051">Antiviral defense</keyword>
<keyword id="KW-0238">DNA-binding</keyword>
<keyword id="KW-0255">Endonuclease</keyword>
<keyword id="KW-0378">Hydrolase</keyword>
<keyword id="KW-0460">Magnesium</keyword>
<keyword id="KW-0464">Manganese</keyword>
<keyword id="KW-0479">Metal-binding</keyword>
<keyword id="KW-0540">Nuclease</keyword>
<keyword id="KW-1185">Reference proteome</keyword>
<name>CAS1B_METHJ</name>
<comment type="function">
    <text evidence="1">CRISPR (clustered regularly interspaced short palindromic repeat), is an adaptive immune system that provides protection against mobile genetic elements (viruses, transposable elements and conjugative plasmids). CRISPR clusters contain sequences complementary to antecedent mobile elements and target invading nucleic acids. CRISPR clusters are transcribed and processed into CRISPR RNA (crRNA). Acts as a dsDNA endonuclease. Involved in the integration of spacer DNA into the CRISPR cassette (By similarity).</text>
</comment>
<comment type="cofactor">
    <cofactor evidence="2">
        <name>Mg(2+)</name>
        <dbReference type="ChEBI" id="CHEBI:18420"/>
    </cofactor>
    <cofactor evidence="2">
        <name>Mn(2+)</name>
        <dbReference type="ChEBI" id="CHEBI:29035"/>
    </cofactor>
</comment>
<comment type="subunit">
    <text evidence="2">Homodimer, forms a heterotetramer with a Cas2 homodimer.</text>
</comment>
<comment type="similarity">
    <text evidence="2">Belongs to the CRISPR-associated endonuclease Cas1 family.</text>
</comment>
<comment type="caution">
    <text evidence="3">Missing conserved residues thought to be important for metal-binding.</text>
</comment>
<organism>
    <name type="scientific">Methanospirillum hungatei JF-1 (strain ATCC 27890 / DSM 864 / NBRC 100397 / JF-1)</name>
    <dbReference type="NCBI Taxonomy" id="323259"/>
    <lineage>
        <taxon>Archaea</taxon>
        <taxon>Methanobacteriati</taxon>
        <taxon>Methanobacteriota</taxon>
        <taxon>Stenosarchaea group</taxon>
        <taxon>Methanomicrobia</taxon>
        <taxon>Methanomicrobiales</taxon>
        <taxon>Methanospirillaceae</taxon>
        <taxon>Methanospirillum</taxon>
    </lineage>
</organism>
<protein>
    <recommendedName>
        <fullName>Putative CRISPR-associated endonuclease Cas1 2</fullName>
        <ecNumber evidence="2">3.1.-.-</ecNumber>
    </recommendedName>
</protein>